<name>A1_BPSP</name>
<feature type="chain" id="PRO_0000003313" description="Minor capsid protein A1">
    <location>
        <begin position="1"/>
        <end position="331"/>
    </location>
</feature>
<reference key="1">
    <citation type="journal article" date="1988" name="Nucleic Acids Res.">
        <title>Analysis of the complete nucleotide sequence of the group IV RNA coliphage SP.</title>
        <authorList>
            <person name="Hirashima A."/>
            <person name="Hirose T."/>
            <person name="Inayama S."/>
            <person name="Inokuchi Y."/>
            <person name="Jacobson A.B."/>
        </authorList>
    </citation>
    <scope>NUCLEOTIDE SEQUENCE [MRNA]</scope>
</reference>
<keyword id="KW-0167">Capsid protein</keyword>
<keyword id="KW-1185">Reference proteome</keyword>
<keyword id="KW-1159">RNA suppression of termination</keyword>
<keyword id="KW-0946">Virion</keyword>
<organismHost>
    <name type="scientific">Escherichia coli</name>
    <dbReference type="NCBI Taxonomy" id="562"/>
</organismHost>
<evidence type="ECO:0000250" key="1">
    <source>
        <dbReference type="UniProtKB" id="Q8LTE1"/>
    </source>
</evidence>
<sequence>MAKLNQVTLSKIGKNGDQTLTLTPRGVNPTNGVASLSEAGAVPALEKRVTVSVAQPSRNRKNFKVQIKLQNPTACTRDACDPSVTRSAFADVTLSFTSYSTDEERALIRTELAALLADPLIVDAIDNLNPAYWAALLVASSGGGDNPSDPDVPVVPDVKPPDGTGRYKCPFACYRLGSIYEVGKEGSPDIYERGDEVSVTFDYALEDFLGNTNWRNWDQRLSDYDIANRRRCRGNGYIDLDATAMQSDDFVLSGRYGVRKVKFPGAFGSIKYLLNIQGDAWLDLSEVTAYRSYGMVIGFWTDSKSPQLPTDFTQFNSANCPVQTVIIIPSL</sequence>
<accession>P09677</accession>
<organism>
    <name type="scientific">Enterobacteria phage SP</name>
    <name type="common">Bacteriophage SP</name>
    <dbReference type="NCBI Taxonomy" id="12027"/>
    <lineage>
        <taxon>Viruses</taxon>
        <taxon>Riboviria</taxon>
        <taxon>Orthornavirae</taxon>
        <taxon>Lenarviricota</taxon>
        <taxon>Leviviricetes</taxon>
        <taxon>Norzivirales</taxon>
        <taxon>Fiersviridae</taxon>
        <taxon>Qubevirus</taxon>
        <taxon>Qubevirus faecium</taxon>
    </lineage>
</organism>
<proteinExistence type="evidence at transcript level"/>
<dbReference type="EMBL" id="X07489">
    <property type="protein sequence ID" value="CAB37299.1"/>
    <property type="molecule type" value="mRNA"/>
</dbReference>
<dbReference type="PIR" id="S01964">
    <property type="entry name" value="S01964"/>
</dbReference>
<dbReference type="SMR" id="P09677"/>
<dbReference type="KEGG" id="vg:955456"/>
<dbReference type="OrthoDB" id="10257at10239"/>
<dbReference type="Proteomes" id="UP000000728">
    <property type="component" value="Genome"/>
</dbReference>
<dbReference type="GO" id="GO:0019028">
    <property type="term" value="C:viral capsid"/>
    <property type="evidence" value="ECO:0007669"/>
    <property type="project" value="UniProtKB-KW"/>
</dbReference>
<dbReference type="GO" id="GO:0005198">
    <property type="term" value="F:structural molecule activity"/>
    <property type="evidence" value="ECO:0007669"/>
    <property type="project" value="InterPro"/>
</dbReference>
<dbReference type="Gene3D" id="3.30.380.10">
    <property type="entry name" value="MS2 Viral Coat Protein"/>
    <property type="match status" value="1"/>
</dbReference>
<dbReference type="InterPro" id="IPR002703">
    <property type="entry name" value="Levivir_coat"/>
</dbReference>
<dbReference type="InterPro" id="IPR015954">
    <property type="entry name" value="Phage_RNA-type_capsid"/>
</dbReference>
<dbReference type="InterPro" id="IPR031819">
    <property type="entry name" value="Read-through_dom"/>
</dbReference>
<dbReference type="Pfam" id="PF01819">
    <property type="entry name" value="Levi_coat"/>
    <property type="match status" value="1"/>
</dbReference>
<dbReference type="Pfam" id="PF16814">
    <property type="entry name" value="Read-through"/>
    <property type="match status" value="1"/>
</dbReference>
<dbReference type="SUPFAM" id="SSF55405">
    <property type="entry name" value="RNA bacteriophage capsid protein"/>
    <property type="match status" value="1"/>
</dbReference>
<comment type="function">
    <text evidence="1">Minor capsid protein.</text>
</comment>
<comment type="subcellular location">
    <subcellularLocation>
        <location evidence="1">Virion</location>
    </subcellularLocation>
    <text evidence="1">Present in 3-10 copies per virion. The readthrough extensions are probably located on the exterior of the capsid.</text>
</comment>
<comment type="miscellaneous">
    <text evidence="1">This protein is translated as a fusion protein by episodic readthrough of the termination codon at the end of the capsid protein. Readthrough of the terminator codon occurs between the codons for Tyr-132 and Trp-133, thereby producing the readthrough extension.</text>
</comment>
<protein>
    <recommendedName>
        <fullName>Minor capsid protein A1</fullName>
    </recommendedName>
</protein>